<accession>P0CC66</accession>
<accession>Q2L947</accession>
<geneLocation type="chloroplast"/>
<name>NU2C1_GOSHI</name>
<organism>
    <name type="scientific">Gossypium hirsutum</name>
    <name type="common">Upland cotton</name>
    <name type="synonym">Gossypium mexicanum</name>
    <dbReference type="NCBI Taxonomy" id="3635"/>
    <lineage>
        <taxon>Eukaryota</taxon>
        <taxon>Viridiplantae</taxon>
        <taxon>Streptophyta</taxon>
        <taxon>Embryophyta</taxon>
        <taxon>Tracheophyta</taxon>
        <taxon>Spermatophyta</taxon>
        <taxon>Magnoliopsida</taxon>
        <taxon>eudicotyledons</taxon>
        <taxon>Gunneridae</taxon>
        <taxon>Pentapetalae</taxon>
        <taxon>rosids</taxon>
        <taxon>malvids</taxon>
        <taxon>Malvales</taxon>
        <taxon>Malvaceae</taxon>
        <taxon>Malvoideae</taxon>
        <taxon>Gossypium</taxon>
    </lineage>
</organism>
<reference key="1">
    <citation type="journal article" date="2006" name="BMC Genomics">
        <title>The complete chloroplast genome sequence of Gossypium hirsutum: organization and phylogenetic relationships to other angiosperms.</title>
        <authorList>
            <person name="Lee S.-B."/>
            <person name="Kaittanis C."/>
            <person name="Jansen R.K."/>
            <person name="Hostetler J.B."/>
            <person name="Tallon L.J."/>
            <person name="Town C.D."/>
            <person name="Daniell H."/>
        </authorList>
    </citation>
    <scope>NUCLEOTIDE SEQUENCE [LARGE SCALE GENOMIC DNA]</scope>
    <source>
        <strain>cv. Coker 310FR</strain>
    </source>
</reference>
<gene>
    <name evidence="1" type="primary">ndhB1</name>
</gene>
<comment type="function">
    <text evidence="1">NDH shuttles electrons from NAD(P)H:plastoquinone, via FMN and iron-sulfur (Fe-S) centers, to quinones in the photosynthetic chain and possibly in a chloroplast respiratory chain. The immediate electron acceptor for the enzyme in this species is believed to be plastoquinone. Couples the redox reaction to proton translocation, and thus conserves the redox energy in a proton gradient.</text>
</comment>
<comment type="catalytic activity">
    <reaction evidence="1">
        <text>a plastoquinone + NADH + (n+1) H(+)(in) = a plastoquinol + NAD(+) + n H(+)(out)</text>
        <dbReference type="Rhea" id="RHEA:42608"/>
        <dbReference type="Rhea" id="RHEA-COMP:9561"/>
        <dbReference type="Rhea" id="RHEA-COMP:9562"/>
        <dbReference type="ChEBI" id="CHEBI:15378"/>
        <dbReference type="ChEBI" id="CHEBI:17757"/>
        <dbReference type="ChEBI" id="CHEBI:57540"/>
        <dbReference type="ChEBI" id="CHEBI:57945"/>
        <dbReference type="ChEBI" id="CHEBI:62192"/>
    </reaction>
</comment>
<comment type="catalytic activity">
    <reaction evidence="1">
        <text>a plastoquinone + NADPH + (n+1) H(+)(in) = a plastoquinol + NADP(+) + n H(+)(out)</text>
        <dbReference type="Rhea" id="RHEA:42612"/>
        <dbReference type="Rhea" id="RHEA-COMP:9561"/>
        <dbReference type="Rhea" id="RHEA-COMP:9562"/>
        <dbReference type="ChEBI" id="CHEBI:15378"/>
        <dbReference type="ChEBI" id="CHEBI:17757"/>
        <dbReference type="ChEBI" id="CHEBI:57783"/>
        <dbReference type="ChEBI" id="CHEBI:58349"/>
        <dbReference type="ChEBI" id="CHEBI:62192"/>
    </reaction>
</comment>
<comment type="subunit">
    <text evidence="1">NDH is composed of at least 16 different subunits, 5 of which are encoded in the nucleus.</text>
</comment>
<comment type="subcellular location">
    <subcellularLocation>
        <location evidence="1">Plastid</location>
        <location evidence="1">Chloroplast thylakoid membrane</location>
        <topology evidence="1">Multi-pass membrane protein</topology>
    </subcellularLocation>
</comment>
<comment type="similarity">
    <text evidence="1">Belongs to the complex I subunit 2 family.</text>
</comment>
<sequence>MIWHVQNENFILDSTRIFMKAFHLLLFDGSFIFPECILIFGLILLLMIDSTSDQKDIPWLYFISSTSLVMSITALLFRWREEPMISFSGNFQTNNFNEIFQFLILLCSTLCIPLSVEYIECTEMAIAEFLLFVLTATLGGMFLCGANDLITIFVAPECFSLCSYLLSGYTKKDVRSNEATTKYLLMGGASSSILVHGFSWLYGSSGGEIELQEIVNGLINTQMYNSPGISIALIFITVGIGFKLSPAPSHQWTPDVYEGSPTPVVAFLSVTSKVAASASATRIFDIPFYFSSNEWHLLLEILAILSMILGNLIAITQTSMKRMLAYSSIGQIGYVIIGIIVGDSNGGYASMITYMLFYISMNLGTFACIVLFGLRTGTDNIRDYAGLYTKDPFLALSLALCLLSLGGLPPLAGFFGKLHLFWCGWQAGLYFLVSIGLLTSVVSIYYYLKIIKLLMTGRNQEITPHVRNYRRSPLRSNNSIELSMIVCVIASTIPGISMNPIIAIAQDTLF</sequence>
<keyword id="KW-0150">Chloroplast</keyword>
<keyword id="KW-0472">Membrane</keyword>
<keyword id="KW-0520">NAD</keyword>
<keyword id="KW-0521">NADP</keyword>
<keyword id="KW-0934">Plastid</keyword>
<keyword id="KW-0618">Plastoquinone</keyword>
<keyword id="KW-0874">Quinone</keyword>
<keyword id="KW-1185">Reference proteome</keyword>
<keyword id="KW-0793">Thylakoid</keyword>
<keyword id="KW-1278">Translocase</keyword>
<keyword id="KW-0812">Transmembrane</keyword>
<keyword id="KW-1133">Transmembrane helix</keyword>
<keyword id="KW-0813">Transport</keyword>
<dbReference type="EC" id="7.1.1.-" evidence="1"/>
<dbReference type="EMBL" id="DQ345959">
    <property type="protein sequence ID" value="ABC73671.1"/>
    <property type="molecule type" value="Genomic_DNA"/>
</dbReference>
<dbReference type="SMR" id="P0CC66"/>
<dbReference type="KEGG" id="ghi:3989173"/>
<dbReference type="KEGG" id="ghi:3989219"/>
<dbReference type="OrthoDB" id="70387at41938"/>
<dbReference type="Proteomes" id="UP000189702">
    <property type="component" value="Unplaced"/>
</dbReference>
<dbReference type="GO" id="GO:0009535">
    <property type="term" value="C:chloroplast thylakoid membrane"/>
    <property type="evidence" value="ECO:0007669"/>
    <property type="project" value="UniProtKB-SubCell"/>
</dbReference>
<dbReference type="GO" id="GO:0008137">
    <property type="term" value="F:NADH dehydrogenase (ubiquinone) activity"/>
    <property type="evidence" value="ECO:0007669"/>
    <property type="project" value="InterPro"/>
</dbReference>
<dbReference type="GO" id="GO:0048038">
    <property type="term" value="F:quinone binding"/>
    <property type="evidence" value="ECO:0007669"/>
    <property type="project" value="UniProtKB-KW"/>
</dbReference>
<dbReference type="GO" id="GO:0042773">
    <property type="term" value="P:ATP synthesis coupled electron transport"/>
    <property type="evidence" value="ECO:0007669"/>
    <property type="project" value="InterPro"/>
</dbReference>
<dbReference type="GO" id="GO:0019684">
    <property type="term" value="P:photosynthesis, light reaction"/>
    <property type="evidence" value="ECO:0007669"/>
    <property type="project" value="UniProtKB-UniRule"/>
</dbReference>
<dbReference type="HAMAP" id="MF_00445">
    <property type="entry name" value="NDH1_NuoN_1"/>
    <property type="match status" value="1"/>
</dbReference>
<dbReference type="InterPro" id="IPR010096">
    <property type="entry name" value="NADH-Q_OxRdtase_suN/2"/>
</dbReference>
<dbReference type="InterPro" id="IPR001750">
    <property type="entry name" value="ND/Mrp_TM"/>
</dbReference>
<dbReference type="InterPro" id="IPR045693">
    <property type="entry name" value="Ndh2_N"/>
</dbReference>
<dbReference type="NCBIfam" id="TIGR01770">
    <property type="entry name" value="NDH_I_N"/>
    <property type="match status" value="1"/>
</dbReference>
<dbReference type="NCBIfam" id="NF002701">
    <property type="entry name" value="PRK02504.1"/>
    <property type="match status" value="1"/>
</dbReference>
<dbReference type="PANTHER" id="PTHR22773">
    <property type="entry name" value="NADH DEHYDROGENASE"/>
    <property type="match status" value="1"/>
</dbReference>
<dbReference type="Pfam" id="PF19530">
    <property type="entry name" value="Ndh2_N"/>
    <property type="match status" value="1"/>
</dbReference>
<dbReference type="Pfam" id="PF00361">
    <property type="entry name" value="Proton_antipo_M"/>
    <property type="match status" value="1"/>
</dbReference>
<dbReference type="PRINTS" id="PR01434">
    <property type="entry name" value="NADHDHGNASE5"/>
</dbReference>
<protein>
    <recommendedName>
        <fullName evidence="1">NAD(P)H-quinone oxidoreductase subunit 2 A, chloroplastic</fullName>
        <ecNumber evidence="1">7.1.1.-</ecNumber>
    </recommendedName>
    <alternativeName>
        <fullName evidence="1">NAD(P)H dehydrogenase, subunit 2 A</fullName>
    </alternativeName>
    <alternativeName>
        <fullName evidence="1">NADH-plastoquinone oxidoreductase subunit 2 A</fullName>
    </alternativeName>
</protein>
<evidence type="ECO:0000255" key="1">
    <source>
        <dbReference type="HAMAP-Rule" id="MF_00445"/>
    </source>
</evidence>
<proteinExistence type="inferred from homology"/>
<feature type="chain" id="PRO_0000275597" description="NAD(P)H-quinone oxidoreductase subunit 2 A, chloroplastic">
    <location>
        <begin position="1"/>
        <end position="510"/>
    </location>
</feature>
<feature type="transmembrane region" description="Helical" evidence="1">
    <location>
        <begin position="24"/>
        <end position="44"/>
    </location>
</feature>
<feature type="transmembrane region" description="Helical" evidence="1">
    <location>
        <begin position="57"/>
        <end position="77"/>
    </location>
</feature>
<feature type="transmembrane region" description="Helical" evidence="1">
    <location>
        <begin position="99"/>
        <end position="119"/>
    </location>
</feature>
<feature type="transmembrane region" description="Helical" evidence="1">
    <location>
        <begin position="124"/>
        <end position="144"/>
    </location>
</feature>
<feature type="transmembrane region" description="Helical" evidence="1">
    <location>
        <begin position="149"/>
        <end position="169"/>
    </location>
</feature>
<feature type="transmembrane region" description="Helical" evidence="1">
    <location>
        <begin position="183"/>
        <end position="203"/>
    </location>
</feature>
<feature type="transmembrane region" description="Helical" evidence="1">
    <location>
        <begin position="227"/>
        <end position="247"/>
    </location>
</feature>
<feature type="transmembrane region" description="Helical" evidence="1">
    <location>
        <begin position="295"/>
        <end position="315"/>
    </location>
</feature>
<feature type="transmembrane region" description="Helical" evidence="1">
    <location>
        <begin position="323"/>
        <end position="343"/>
    </location>
</feature>
<feature type="transmembrane region" description="Helical" evidence="1">
    <location>
        <begin position="354"/>
        <end position="374"/>
    </location>
</feature>
<feature type="transmembrane region" description="Helical" evidence="1">
    <location>
        <begin position="395"/>
        <end position="415"/>
    </location>
</feature>
<feature type="transmembrane region" description="Helical" evidence="1">
    <location>
        <begin position="418"/>
        <end position="438"/>
    </location>
</feature>
<feature type="transmembrane region" description="Helical" evidence="1">
    <location>
        <begin position="484"/>
        <end position="504"/>
    </location>
</feature>